<name>DNAA_VIBA3</name>
<reference key="1">
    <citation type="submission" date="2009-02" db="EMBL/GenBank/DDBJ databases">
        <title>Vibrio splendidus str. LGP32 complete genome.</title>
        <authorList>
            <person name="Mazel D."/>
            <person name="Le Roux F."/>
        </authorList>
    </citation>
    <scope>NUCLEOTIDE SEQUENCE [LARGE SCALE GENOMIC DNA]</scope>
    <source>
        <strain>LGP32</strain>
    </source>
</reference>
<dbReference type="EMBL" id="FM954972">
    <property type="protein sequence ID" value="CAV17067.1"/>
    <property type="molecule type" value="Genomic_DNA"/>
</dbReference>
<dbReference type="SMR" id="B7VGI4"/>
<dbReference type="STRING" id="575788.VS_0010"/>
<dbReference type="KEGG" id="vsp:VS_0010"/>
<dbReference type="eggNOG" id="COG0593">
    <property type="taxonomic scope" value="Bacteria"/>
</dbReference>
<dbReference type="HOGENOM" id="CLU_026910_0_1_6"/>
<dbReference type="Proteomes" id="UP000009100">
    <property type="component" value="Chromosome 1"/>
</dbReference>
<dbReference type="GO" id="GO:0005737">
    <property type="term" value="C:cytoplasm"/>
    <property type="evidence" value="ECO:0007669"/>
    <property type="project" value="UniProtKB-SubCell"/>
</dbReference>
<dbReference type="GO" id="GO:0005886">
    <property type="term" value="C:plasma membrane"/>
    <property type="evidence" value="ECO:0007669"/>
    <property type="project" value="TreeGrafter"/>
</dbReference>
<dbReference type="GO" id="GO:0005524">
    <property type="term" value="F:ATP binding"/>
    <property type="evidence" value="ECO:0007669"/>
    <property type="project" value="UniProtKB-UniRule"/>
</dbReference>
<dbReference type="GO" id="GO:0016887">
    <property type="term" value="F:ATP hydrolysis activity"/>
    <property type="evidence" value="ECO:0007669"/>
    <property type="project" value="InterPro"/>
</dbReference>
<dbReference type="GO" id="GO:0003688">
    <property type="term" value="F:DNA replication origin binding"/>
    <property type="evidence" value="ECO:0007669"/>
    <property type="project" value="UniProtKB-UniRule"/>
</dbReference>
<dbReference type="GO" id="GO:0008289">
    <property type="term" value="F:lipid binding"/>
    <property type="evidence" value="ECO:0007669"/>
    <property type="project" value="UniProtKB-KW"/>
</dbReference>
<dbReference type="GO" id="GO:0006270">
    <property type="term" value="P:DNA replication initiation"/>
    <property type="evidence" value="ECO:0007669"/>
    <property type="project" value="UniProtKB-UniRule"/>
</dbReference>
<dbReference type="GO" id="GO:0006275">
    <property type="term" value="P:regulation of DNA replication"/>
    <property type="evidence" value="ECO:0007669"/>
    <property type="project" value="UniProtKB-UniRule"/>
</dbReference>
<dbReference type="CDD" id="cd00009">
    <property type="entry name" value="AAA"/>
    <property type="match status" value="1"/>
</dbReference>
<dbReference type="CDD" id="cd06571">
    <property type="entry name" value="Bac_DnaA_C"/>
    <property type="match status" value="1"/>
</dbReference>
<dbReference type="FunFam" id="1.10.1750.10:FF:000001">
    <property type="entry name" value="Chromosomal replication initiator protein DnaA"/>
    <property type="match status" value="1"/>
</dbReference>
<dbReference type="FunFam" id="1.10.8.60:FF:000003">
    <property type="entry name" value="Chromosomal replication initiator protein DnaA"/>
    <property type="match status" value="1"/>
</dbReference>
<dbReference type="FunFam" id="3.30.300.180:FF:000001">
    <property type="entry name" value="Chromosomal replication initiator protein DnaA"/>
    <property type="match status" value="1"/>
</dbReference>
<dbReference type="FunFam" id="3.40.50.300:FF:000103">
    <property type="entry name" value="Chromosomal replication initiator protein DnaA"/>
    <property type="match status" value="1"/>
</dbReference>
<dbReference type="Gene3D" id="1.10.1750.10">
    <property type="match status" value="1"/>
</dbReference>
<dbReference type="Gene3D" id="1.10.8.60">
    <property type="match status" value="1"/>
</dbReference>
<dbReference type="Gene3D" id="3.30.300.180">
    <property type="match status" value="1"/>
</dbReference>
<dbReference type="Gene3D" id="3.40.50.300">
    <property type="entry name" value="P-loop containing nucleotide triphosphate hydrolases"/>
    <property type="match status" value="1"/>
</dbReference>
<dbReference type="HAMAP" id="MF_00377">
    <property type="entry name" value="DnaA_bact"/>
    <property type="match status" value="1"/>
</dbReference>
<dbReference type="InterPro" id="IPR003593">
    <property type="entry name" value="AAA+_ATPase"/>
</dbReference>
<dbReference type="InterPro" id="IPR001957">
    <property type="entry name" value="Chromosome_initiator_DnaA"/>
</dbReference>
<dbReference type="InterPro" id="IPR020591">
    <property type="entry name" value="Chromosome_initiator_DnaA-like"/>
</dbReference>
<dbReference type="InterPro" id="IPR018312">
    <property type="entry name" value="Chromosome_initiator_DnaA_CS"/>
</dbReference>
<dbReference type="InterPro" id="IPR013159">
    <property type="entry name" value="DnaA_C"/>
</dbReference>
<dbReference type="InterPro" id="IPR013317">
    <property type="entry name" value="DnaA_dom"/>
</dbReference>
<dbReference type="InterPro" id="IPR024633">
    <property type="entry name" value="DnaA_N_dom"/>
</dbReference>
<dbReference type="InterPro" id="IPR038454">
    <property type="entry name" value="DnaA_N_sf"/>
</dbReference>
<dbReference type="InterPro" id="IPR055199">
    <property type="entry name" value="Hda_lid"/>
</dbReference>
<dbReference type="InterPro" id="IPR027417">
    <property type="entry name" value="P-loop_NTPase"/>
</dbReference>
<dbReference type="InterPro" id="IPR010921">
    <property type="entry name" value="Trp_repressor/repl_initiator"/>
</dbReference>
<dbReference type="NCBIfam" id="TIGR00362">
    <property type="entry name" value="DnaA"/>
    <property type="match status" value="1"/>
</dbReference>
<dbReference type="PANTHER" id="PTHR30050">
    <property type="entry name" value="CHROMOSOMAL REPLICATION INITIATOR PROTEIN DNAA"/>
    <property type="match status" value="1"/>
</dbReference>
<dbReference type="PANTHER" id="PTHR30050:SF2">
    <property type="entry name" value="CHROMOSOMAL REPLICATION INITIATOR PROTEIN DNAA"/>
    <property type="match status" value="1"/>
</dbReference>
<dbReference type="Pfam" id="PF00308">
    <property type="entry name" value="Bac_DnaA"/>
    <property type="match status" value="1"/>
</dbReference>
<dbReference type="Pfam" id="PF08299">
    <property type="entry name" value="Bac_DnaA_C"/>
    <property type="match status" value="1"/>
</dbReference>
<dbReference type="Pfam" id="PF11638">
    <property type="entry name" value="DnaA_N"/>
    <property type="match status" value="1"/>
</dbReference>
<dbReference type="Pfam" id="PF22688">
    <property type="entry name" value="Hda_lid"/>
    <property type="match status" value="1"/>
</dbReference>
<dbReference type="PRINTS" id="PR00051">
    <property type="entry name" value="DNAA"/>
</dbReference>
<dbReference type="SMART" id="SM00382">
    <property type="entry name" value="AAA"/>
    <property type="match status" value="1"/>
</dbReference>
<dbReference type="SMART" id="SM00760">
    <property type="entry name" value="Bac_DnaA_C"/>
    <property type="match status" value="1"/>
</dbReference>
<dbReference type="SUPFAM" id="SSF52540">
    <property type="entry name" value="P-loop containing nucleoside triphosphate hydrolases"/>
    <property type="match status" value="1"/>
</dbReference>
<dbReference type="SUPFAM" id="SSF48295">
    <property type="entry name" value="TrpR-like"/>
    <property type="match status" value="1"/>
</dbReference>
<dbReference type="PROSITE" id="PS01008">
    <property type="entry name" value="DNAA"/>
    <property type="match status" value="1"/>
</dbReference>
<organism>
    <name type="scientific">Vibrio atlanticus (strain LGP32)</name>
    <name type="common">Vibrio splendidus (strain Mel32)</name>
    <dbReference type="NCBI Taxonomy" id="575788"/>
    <lineage>
        <taxon>Bacteria</taxon>
        <taxon>Pseudomonadati</taxon>
        <taxon>Pseudomonadota</taxon>
        <taxon>Gammaproteobacteria</taxon>
        <taxon>Vibrionales</taxon>
        <taxon>Vibrionaceae</taxon>
        <taxon>Vibrio</taxon>
    </lineage>
</organism>
<feature type="chain" id="PRO_1000189818" description="Chromosomal replication initiator protein DnaA">
    <location>
        <begin position="1"/>
        <end position="473"/>
    </location>
</feature>
<feature type="region of interest" description="Domain I, interacts with DnaA modulators" evidence="1">
    <location>
        <begin position="1"/>
        <end position="90"/>
    </location>
</feature>
<feature type="region of interest" description="Domain II" evidence="1">
    <location>
        <begin position="91"/>
        <end position="136"/>
    </location>
</feature>
<feature type="region of interest" description="Domain III, AAA+ region" evidence="1">
    <location>
        <begin position="137"/>
        <end position="353"/>
    </location>
</feature>
<feature type="region of interest" description="Domain IV, binds dsDNA" evidence="1">
    <location>
        <begin position="354"/>
        <end position="473"/>
    </location>
</feature>
<feature type="binding site" evidence="1">
    <location>
        <position position="181"/>
    </location>
    <ligand>
        <name>ATP</name>
        <dbReference type="ChEBI" id="CHEBI:30616"/>
    </ligand>
</feature>
<feature type="binding site" evidence="1">
    <location>
        <position position="183"/>
    </location>
    <ligand>
        <name>ATP</name>
        <dbReference type="ChEBI" id="CHEBI:30616"/>
    </ligand>
</feature>
<feature type="binding site" evidence="1">
    <location>
        <position position="184"/>
    </location>
    <ligand>
        <name>ATP</name>
        <dbReference type="ChEBI" id="CHEBI:30616"/>
    </ligand>
</feature>
<feature type="binding site" evidence="1">
    <location>
        <position position="185"/>
    </location>
    <ligand>
        <name>ATP</name>
        <dbReference type="ChEBI" id="CHEBI:30616"/>
    </ligand>
</feature>
<accession>B7VGI4</accession>
<evidence type="ECO:0000255" key="1">
    <source>
        <dbReference type="HAMAP-Rule" id="MF_00377"/>
    </source>
</evidence>
<gene>
    <name evidence="1" type="primary">dnaA</name>
    <name type="ordered locus">VS_0010</name>
</gene>
<sequence>MSSSLWLQCLQQLQEELPATEFSMWVRPLQAELNGNTLTLFAPNRFVLDWVRDKYLNSINRLLQEYCGNDIPHLHFEIGNKRVTAPKSETIAPARTRTAADVAAESSAPAQLQARKPVHNIWRDEEPVAVDLNHRSNVNPKHKFNNFVEGKSNQLGLAAARQVSDNPGTAYNPLFLYGGTGLGKTHLLHAVGNAIVDNKPNAKVVYMHSERFVQDMVKALQNNAIEEFKRYYRSVDALLIDDIQFFANKERSQEEFFHTFNALLEGNQQIILTSDRYPKEINGVEDRLKSRFGWGLTVAIEPPELETRVAILMKKAEDHQIHLADEVAFFIAKRLRSNVRELEGALNRVIANANFTGRPITIDFVREALRDLLALQEKLVTIDNIQKTVAEYYKIKVADLLSKRRSRSVARPRQLAMALAKELTNHSLPEIGDAFGGRDHTTVLHACRKIAQLREESHDIKEDYSNLIRTLSS</sequence>
<keyword id="KW-0067">ATP-binding</keyword>
<keyword id="KW-0963">Cytoplasm</keyword>
<keyword id="KW-0235">DNA replication</keyword>
<keyword id="KW-0238">DNA-binding</keyword>
<keyword id="KW-0446">Lipid-binding</keyword>
<keyword id="KW-0547">Nucleotide-binding</keyword>
<comment type="function">
    <text evidence="1">Plays an essential role in the initiation and regulation of chromosomal replication. ATP-DnaA binds to the origin of replication (oriC) to initiate formation of the DNA replication initiation complex once per cell cycle. Binds the DnaA box (a 9 base pair repeat at the origin) and separates the double-stranded (ds)DNA. Forms a right-handed helical filament on oriC DNA; dsDNA binds to the exterior of the filament while single-stranded (ss)DNA is stabiized in the filament's interior. The ATP-DnaA-oriC complex binds and stabilizes one strand of the AT-rich DNA unwinding element (DUE), permitting loading of DNA polymerase. After initiation quickly degrades to an ADP-DnaA complex that is not apt for DNA replication. Binds acidic phospholipids.</text>
</comment>
<comment type="subunit">
    <text evidence="1">Oligomerizes as a right-handed, spiral filament on DNA at oriC.</text>
</comment>
<comment type="subcellular location">
    <subcellularLocation>
        <location evidence="1">Cytoplasm</location>
    </subcellularLocation>
</comment>
<comment type="domain">
    <text evidence="1">Domain I is involved in oligomerization and binding regulators, domain II is flexibile and of varying length in different bacteria, domain III forms the AAA+ region, while domain IV binds dsDNA.</text>
</comment>
<comment type="similarity">
    <text evidence="1">Belongs to the DnaA family.</text>
</comment>
<protein>
    <recommendedName>
        <fullName evidence="1">Chromosomal replication initiator protein DnaA</fullName>
    </recommendedName>
</protein>
<proteinExistence type="inferred from homology"/>